<gene>
    <name type="primary">UL120</name>
</gene>
<organismHost>
    <name type="scientific">Homo sapiens</name>
    <name type="common">Human</name>
    <dbReference type="NCBI Taxonomy" id="9606"/>
</organismHost>
<name>UL120_HCMVA</name>
<protein>
    <recommendedName>
        <fullName>Uncharacterized protein UL120</fullName>
    </recommendedName>
</protein>
<feature type="signal peptide" evidence="1">
    <location>
        <begin position="1"/>
        <end position="25"/>
    </location>
</feature>
<feature type="chain" id="PRO_0000037458" description="Uncharacterized protein UL120">
    <location>
        <begin position="26"/>
        <end position="201"/>
    </location>
</feature>
<feature type="topological domain" description="Extracellular" evidence="1">
    <location>
        <begin position="26"/>
        <end position="170"/>
    </location>
</feature>
<feature type="transmembrane region" description="Helical" evidence="1">
    <location>
        <begin position="171"/>
        <end position="191"/>
    </location>
</feature>
<feature type="topological domain" description="Cytoplasmic" evidence="1">
    <location>
        <begin position="192"/>
        <end position="201"/>
    </location>
</feature>
<feature type="glycosylation site" description="N-linked (GlcNAc...) asparagine; by host" evidence="1">
    <location>
        <position position="46"/>
    </location>
</feature>
<feature type="glycosylation site" description="N-linked (GlcNAc...) asparagine; by host" evidence="1">
    <location>
        <position position="49"/>
    </location>
</feature>
<feature type="glycosylation site" description="N-linked (GlcNAc...) asparagine; by host" evidence="1">
    <location>
        <position position="55"/>
    </location>
</feature>
<feature type="glycosylation site" description="N-linked (GlcNAc...) asparagine; by host" evidence="1">
    <location>
        <position position="84"/>
    </location>
</feature>
<feature type="glycosylation site" description="N-linked (GlcNAc...) asparagine; by host" evidence="1">
    <location>
        <position position="95"/>
    </location>
</feature>
<feature type="glycosylation site" description="N-linked (GlcNAc...) asparagine; by host" evidence="1">
    <location>
        <position position="113"/>
    </location>
</feature>
<feature type="glycosylation site" description="N-linked (GlcNAc...) asparagine; by host" evidence="1">
    <location>
        <position position="122"/>
    </location>
</feature>
<feature type="glycosylation site" description="N-linked (GlcNAc...) asparagine; by host" evidence="1">
    <location>
        <position position="137"/>
    </location>
</feature>
<feature type="glycosylation site" description="N-linked (GlcNAc...) asparagine; by host" evidence="1">
    <location>
        <position position="144"/>
    </location>
</feature>
<organism>
    <name type="scientific">Human cytomegalovirus (strain AD169)</name>
    <name type="common">HHV-5</name>
    <name type="synonym">Human herpesvirus 5</name>
    <dbReference type="NCBI Taxonomy" id="10360"/>
    <lineage>
        <taxon>Viruses</taxon>
        <taxon>Duplodnaviria</taxon>
        <taxon>Heunggongvirae</taxon>
        <taxon>Peploviricota</taxon>
        <taxon>Herviviricetes</taxon>
        <taxon>Herpesvirales</taxon>
        <taxon>Orthoherpesviridae</taxon>
        <taxon>Betaherpesvirinae</taxon>
        <taxon>Cytomegalovirus</taxon>
        <taxon>Cytomegalovirus humanbeta5</taxon>
        <taxon>Human cytomegalovirus</taxon>
    </lineage>
</organism>
<accession>P16740</accession>
<accession>Q7M6S7</accession>
<keyword id="KW-0325">Glycoprotein</keyword>
<keyword id="KW-1043">Host membrane</keyword>
<keyword id="KW-0472">Membrane</keyword>
<keyword id="KW-1185">Reference proteome</keyword>
<keyword id="KW-0732">Signal</keyword>
<keyword id="KW-0812">Transmembrane</keyword>
<keyword id="KW-1133">Transmembrane helix</keyword>
<proteinExistence type="inferred from homology"/>
<sequence>MYRAGVTLLVVAVVSLGRWDVVTMAAAIGIGWYEPEVSMAYIYQYNDTNLTIFCNTTACNSPFLASGMMISAPLKTRFLTSKVNYSNDMDNDRKNYTHQLKYMLAGAPGTYVNSSVTCWGSNGTFGAKTFLVKSMVNNTDSNTNTSIIHFVQQDELVDNPAYFRRSNHRAFMIVILTQVVFVVFIINASFIWSWTFRRHKR</sequence>
<comment type="subcellular location">
    <subcellularLocation>
        <location evidence="2">Host membrane</location>
        <topology evidence="2">Single-pass membrane protein</topology>
    </subcellularLocation>
</comment>
<comment type="similarity">
    <text evidence="2">Belongs to the HHV-5 UL120 protein family.</text>
</comment>
<dbReference type="EMBL" id="X17403">
    <property type="protein sequence ID" value="CAA35322.1"/>
    <property type="molecule type" value="Genomic_DNA"/>
</dbReference>
<dbReference type="EMBL" id="BK000394">
    <property type="protein sequence ID" value="DAA00109.1"/>
    <property type="molecule type" value="Genomic_DNA"/>
</dbReference>
<dbReference type="PIR" id="S09887">
    <property type="entry name" value="S09887"/>
</dbReference>
<dbReference type="SMR" id="P16740"/>
<dbReference type="GlyCosmos" id="P16740">
    <property type="glycosylation" value="9 sites, No reported glycans"/>
</dbReference>
<dbReference type="Proteomes" id="UP000008991">
    <property type="component" value="Segment"/>
</dbReference>
<dbReference type="Proteomes" id="UP000008992">
    <property type="component" value="Segment"/>
</dbReference>
<dbReference type="GO" id="GO:0033644">
    <property type="term" value="C:host cell membrane"/>
    <property type="evidence" value="ECO:0007669"/>
    <property type="project" value="UniProtKB-SubCell"/>
</dbReference>
<dbReference type="GO" id="GO:0016020">
    <property type="term" value="C:membrane"/>
    <property type="evidence" value="ECO:0007669"/>
    <property type="project" value="UniProtKB-KW"/>
</dbReference>
<reference key="1">
    <citation type="journal article" date="1990" name="Curr. Top. Microbiol. Immunol.">
        <title>Analysis of the protein-coding content of the sequence of human cytomegalovirus strain AD169.</title>
        <authorList>
            <person name="Chee M.S."/>
            <person name="Bankier A.T."/>
            <person name="Beck S."/>
            <person name="Bohni R."/>
            <person name="Brown C.M."/>
            <person name="Cerny R."/>
            <person name="Horsnell T."/>
            <person name="Hutchison C.A. III"/>
            <person name="Kouzarides T."/>
            <person name="Martignetti J.A."/>
            <person name="Preddie E."/>
            <person name="Satchwell S.C."/>
            <person name="Tomlinson P."/>
            <person name="Weston K.M."/>
            <person name="Barrell B.G."/>
        </authorList>
    </citation>
    <scope>NUCLEOTIDE SEQUENCE [LARGE SCALE GENOMIC DNA]</scope>
</reference>
<reference key="2">
    <citation type="journal article" date="2003" name="J. Gen. Virol.">
        <title>The human cytomegalovirus genome revisited: comparison with the chimpanzee cytomegalovirus genome.</title>
        <authorList>
            <person name="Davison A.J."/>
            <person name="Dolan A."/>
            <person name="Akter P."/>
            <person name="Addison C."/>
            <person name="Dargan D.J."/>
            <person name="Alcendor D.J."/>
            <person name="McGeoch D.J."/>
            <person name="Hayward G.S."/>
        </authorList>
    </citation>
    <scope>GENOME REANNOTATION</scope>
</reference>
<reference key="3">
    <citation type="journal article" date="2003" name="J. Gen. Virol.">
        <authorList>
            <person name="Davison A.J."/>
            <person name="Dolan A."/>
            <person name="Akter P."/>
            <person name="Addison C."/>
            <person name="Dargan D.J."/>
            <person name="Alcendor D.J."/>
            <person name="McGeoch D.J."/>
            <person name="Hayward G.S."/>
        </authorList>
    </citation>
    <scope>ERRATUM OF PUBMED:12533697</scope>
</reference>
<evidence type="ECO:0000255" key="1"/>
<evidence type="ECO:0000305" key="2"/>